<name>RL10_BRUAB</name>
<evidence type="ECO:0000250" key="1"/>
<evidence type="ECO:0000305" key="2"/>
<proteinExistence type="inferred from homology"/>
<keyword id="KW-0687">Ribonucleoprotein</keyword>
<keyword id="KW-0689">Ribosomal protein</keyword>
<keyword id="KW-0694">RNA-binding</keyword>
<keyword id="KW-0699">rRNA-binding</keyword>
<comment type="function">
    <text evidence="1">Forms part of the ribosomal stalk, playing a central role in the interaction of the ribosome with GTP-bound translation factors.</text>
</comment>
<comment type="subunit">
    <text evidence="1">Part of the ribosomal stalk of the 50S ribosomal subunit. The N-terminus interacts with L11 and the large rRNA to form the base of the stalk. The C-terminus forms an elongated spine to which L12 dimers bind in a sequential fashion forming a multimeric L10(L12)X complex (By similarity).</text>
</comment>
<comment type="similarity">
    <text evidence="2">Belongs to the universal ribosomal protein uL10 family.</text>
</comment>
<comment type="sequence caution" evidence="2">
    <conflict type="frameshift">
        <sequence resource="EMBL-CDS" id="AAA23000"/>
    </conflict>
</comment>
<gene>
    <name type="primary">rplJ</name>
    <name type="ordered locus">BruAb1_1250</name>
</gene>
<sequence>MDRAEKREFVAWLNGAFKESGSVVVAHYTGLTVAQMSDLRSKMRDAGGSVKVAKNRLAKIALQGTESEGIVDLFTGQTVVAYANDPITAPKVAVEFAKANDKLVILGGAMGATTLNADGVKSLASLPSLDELRAKLVGMIQTPAQRLAVLTSAPAGQIARVIGAHARKNEAA</sequence>
<protein>
    <recommendedName>
        <fullName evidence="2">Large ribosomal subunit protein uL10</fullName>
    </recommendedName>
    <alternativeName>
        <fullName>50S ribosomal protein L10</fullName>
    </alternativeName>
</protein>
<feature type="chain" id="PRO_0000154599" description="Large ribosomal subunit protein uL10">
    <location>
        <begin position="1"/>
        <end position="172"/>
    </location>
</feature>
<feature type="sequence conflict" description="In Ref. 2; AAA23000." evidence="2" ref="2">
    <original>V</original>
    <variation>A</variation>
    <location>
        <position position="71"/>
    </location>
</feature>
<feature type="sequence conflict" description="In Ref. 2." evidence="2" ref="2">
    <original>A</original>
    <variation>R</variation>
    <location>
        <position position="124"/>
    </location>
</feature>
<accession>P41107</accession>
<accession>Q57CP6</accession>
<dbReference type="EMBL" id="AE017223">
    <property type="protein sequence ID" value="AAX74588.1"/>
    <property type="molecule type" value="Genomic_DNA"/>
</dbReference>
<dbReference type="EMBL" id="L23505">
    <property type="protein sequence ID" value="AAA23000.1"/>
    <property type="status" value="ALT_FRAME"/>
    <property type="molecule type" value="Genomic_DNA"/>
</dbReference>
<dbReference type="PIR" id="I40349">
    <property type="entry name" value="I40349"/>
</dbReference>
<dbReference type="RefSeq" id="WP_011265350.1">
    <property type="nucleotide sequence ID" value="NC_006932.1"/>
</dbReference>
<dbReference type="SMR" id="P41107"/>
<dbReference type="EnsemblBacteria" id="AAX74588">
    <property type="protein sequence ID" value="AAX74588"/>
    <property type="gene ID" value="BruAb1_1250"/>
</dbReference>
<dbReference type="KEGG" id="bmb:BruAb1_1250"/>
<dbReference type="HOGENOM" id="CLU_092227_0_0_5"/>
<dbReference type="Proteomes" id="UP000000540">
    <property type="component" value="Chromosome I"/>
</dbReference>
<dbReference type="GO" id="GO:0015934">
    <property type="term" value="C:large ribosomal subunit"/>
    <property type="evidence" value="ECO:0007669"/>
    <property type="project" value="InterPro"/>
</dbReference>
<dbReference type="GO" id="GO:0070180">
    <property type="term" value="F:large ribosomal subunit rRNA binding"/>
    <property type="evidence" value="ECO:0007669"/>
    <property type="project" value="UniProtKB-UniRule"/>
</dbReference>
<dbReference type="GO" id="GO:0003735">
    <property type="term" value="F:structural constituent of ribosome"/>
    <property type="evidence" value="ECO:0007669"/>
    <property type="project" value="InterPro"/>
</dbReference>
<dbReference type="GO" id="GO:0006412">
    <property type="term" value="P:translation"/>
    <property type="evidence" value="ECO:0007669"/>
    <property type="project" value="UniProtKB-UniRule"/>
</dbReference>
<dbReference type="CDD" id="cd05797">
    <property type="entry name" value="Ribosomal_L10"/>
    <property type="match status" value="1"/>
</dbReference>
<dbReference type="Gene3D" id="3.30.70.1730">
    <property type="match status" value="1"/>
</dbReference>
<dbReference type="Gene3D" id="6.10.250.290">
    <property type="match status" value="1"/>
</dbReference>
<dbReference type="HAMAP" id="MF_00362">
    <property type="entry name" value="Ribosomal_uL10"/>
    <property type="match status" value="1"/>
</dbReference>
<dbReference type="InterPro" id="IPR001790">
    <property type="entry name" value="Ribosomal_uL10"/>
</dbReference>
<dbReference type="InterPro" id="IPR043141">
    <property type="entry name" value="Ribosomal_uL10-like_sf"/>
</dbReference>
<dbReference type="InterPro" id="IPR022973">
    <property type="entry name" value="Ribosomal_uL10_bac"/>
</dbReference>
<dbReference type="InterPro" id="IPR047865">
    <property type="entry name" value="Ribosomal_uL10_bac_type"/>
</dbReference>
<dbReference type="InterPro" id="IPR002363">
    <property type="entry name" value="Ribosomal_uL10_CS_bac"/>
</dbReference>
<dbReference type="NCBIfam" id="NF000955">
    <property type="entry name" value="PRK00099.1-1"/>
    <property type="match status" value="1"/>
</dbReference>
<dbReference type="PANTHER" id="PTHR11560">
    <property type="entry name" value="39S RIBOSOMAL PROTEIN L10, MITOCHONDRIAL"/>
    <property type="match status" value="1"/>
</dbReference>
<dbReference type="Pfam" id="PF00466">
    <property type="entry name" value="Ribosomal_L10"/>
    <property type="match status" value="1"/>
</dbReference>
<dbReference type="SUPFAM" id="SSF160369">
    <property type="entry name" value="Ribosomal protein L10-like"/>
    <property type="match status" value="1"/>
</dbReference>
<dbReference type="PROSITE" id="PS01109">
    <property type="entry name" value="RIBOSOMAL_L10"/>
    <property type="match status" value="1"/>
</dbReference>
<organism>
    <name type="scientific">Brucella abortus biovar 1 (strain 9-941)</name>
    <dbReference type="NCBI Taxonomy" id="262698"/>
    <lineage>
        <taxon>Bacteria</taxon>
        <taxon>Pseudomonadati</taxon>
        <taxon>Pseudomonadota</taxon>
        <taxon>Alphaproteobacteria</taxon>
        <taxon>Hyphomicrobiales</taxon>
        <taxon>Brucellaceae</taxon>
        <taxon>Brucella/Ochrobactrum group</taxon>
        <taxon>Brucella</taxon>
    </lineage>
</organism>
<reference key="1">
    <citation type="journal article" date="2005" name="J. Bacteriol.">
        <title>Completion of the genome sequence of Brucella abortus and comparison to the highly similar genomes of Brucella melitensis and Brucella suis.</title>
        <authorList>
            <person name="Halling S.M."/>
            <person name="Peterson-Burch B.D."/>
            <person name="Bricker B.J."/>
            <person name="Zuerner R.L."/>
            <person name="Qing Z."/>
            <person name="Li L.-L."/>
            <person name="Kapur V."/>
            <person name="Alt D.P."/>
            <person name="Olsen S.C."/>
        </authorList>
    </citation>
    <scope>NUCLEOTIDE SEQUENCE [LARGE SCALE GENOMIC DNA]</scope>
    <source>
        <strain>9-941</strain>
    </source>
</reference>
<reference key="2">
    <citation type="journal article" date="1994" name="Gene">
        <title>Sequences of the rplJL operon containing the L10 and L7/L12 genes from Brucella abortus.</title>
        <authorList>
            <person name="Oliveira S.C."/>
            <person name="Zhu Y."/>
            <person name="Splitter G.A."/>
        </authorList>
    </citation>
    <scope>NUCLEOTIDE SEQUENCE [GENOMIC DNA] OF 1-143</scope>
    <source>
        <strain>19</strain>
    </source>
</reference>